<gene>
    <name evidence="1" type="primary">ligA</name>
    <name type="ordered locus">Tpet_0824</name>
</gene>
<proteinExistence type="inferred from homology"/>
<reference key="1">
    <citation type="submission" date="2007-05" db="EMBL/GenBank/DDBJ databases">
        <title>Complete sequence of Thermotoga petrophila RKU-1.</title>
        <authorList>
            <consortium name="US DOE Joint Genome Institute"/>
            <person name="Copeland A."/>
            <person name="Lucas S."/>
            <person name="Lapidus A."/>
            <person name="Barry K."/>
            <person name="Glavina del Rio T."/>
            <person name="Dalin E."/>
            <person name="Tice H."/>
            <person name="Pitluck S."/>
            <person name="Sims D."/>
            <person name="Brettin T."/>
            <person name="Bruce D."/>
            <person name="Detter J.C."/>
            <person name="Han C."/>
            <person name="Tapia R."/>
            <person name="Schmutz J."/>
            <person name="Larimer F."/>
            <person name="Land M."/>
            <person name="Hauser L."/>
            <person name="Kyrpides N."/>
            <person name="Mikhailova N."/>
            <person name="Nelson K."/>
            <person name="Gogarten J.P."/>
            <person name="Noll K."/>
            <person name="Richardson P."/>
        </authorList>
    </citation>
    <scope>NUCLEOTIDE SEQUENCE [LARGE SCALE GENOMIC DNA]</scope>
    <source>
        <strain>ATCC BAA-488 / DSM 13995 / JCM 10881 / RKU-1</strain>
    </source>
</reference>
<sequence length="688" mass="78807">MSERKIPKEVIEEVERLREEIEYHNYRYYVLNDPVITDEEYDKLMRRLIELERMYPELVTPDSPTQRVGGKVLEGFKTVKHSVPMLSLDNTYNEEEILEFDRRVKKTLQEAEVEYVAELKIDGVSIALRYENGKFVLGATRGDGIEGEDVSENVKTVRSIPLRLRKPVTVEVRGEIYMPVDEFKRLNDEREEEGLPPFANPRNAAAGTLRQLNTALVAARRLDSFIYYVVHPENYGLKTQWEALQFLKELGFKVNPHSKLCKNIQEVIDYWREWEERKKELDYWVDGVVVKVNRFDFQRILGETSKAPRWAIAFKFPAEQARTRVLDVTIQVGRTGVLTPVAELEPVQLAGTIVKRASLHNFEYIREKDIRIGDYVFVEKAGGIIPQIVKSIPELRTGSEKEIKPPDKCPVCGGKVGKLDPEEVALRCLNPHCPAKLKRALRTLVSREALDIEGLGEKLIDRLVDAGLVKDIADIFYLTPFDLAQLGPGIGQRTIAKILQEIEEAKKRPLHKLITGLGIPMVGQKTAKILAEHFKSLEAIADASYETLKDIPGIGPEIAKSIVEYFRNPKTREIIEKLKKAGVKLEERVMKLDILKGLTFAVTGTLKNFTREEIVEFFEKLGAKVVNSVSRNTDYLIVGENPGSKYEKAKMLKVKTMSEEEFLEFVRKRAELKGYNFDEIMRSWKEWS</sequence>
<protein>
    <recommendedName>
        <fullName evidence="1">DNA ligase</fullName>
        <ecNumber evidence="1">6.5.1.2</ecNumber>
    </recommendedName>
    <alternativeName>
        <fullName evidence="1">Polydeoxyribonucleotide synthase [NAD(+)]</fullName>
    </alternativeName>
</protein>
<dbReference type="EC" id="6.5.1.2" evidence="1"/>
<dbReference type="EMBL" id="CP000702">
    <property type="protein sequence ID" value="ABQ46843.1"/>
    <property type="molecule type" value="Genomic_DNA"/>
</dbReference>
<dbReference type="RefSeq" id="WP_011943410.1">
    <property type="nucleotide sequence ID" value="NC_009486.1"/>
</dbReference>
<dbReference type="SMR" id="A5IKX0"/>
<dbReference type="STRING" id="390874.Tpet_0824"/>
<dbReference type="KEGG" id="tpt:Tpet_0824"/>
<dbReference type="eggNOG" id="COG0272">
    <property type="taxonomic scope" value="Bacteria"/>
</dbReference>
<dbReference type="HOGENOM" id="CLU_007764_2_1_0"/>
<dbReference type="Proteomes" id="UP000006558">
    <property type="component" value="Chromosome"/>
</dbReference>
<dbReference type="GO" id="GO:0005829">
    <property type="term" value="C:cytosol"/>
    <property type="evidence" value="ECO:0007669"/>
    <property type="project" value="TreeGrafter"/>
</dbReference>
<dbReference type="GO" id="GO:0003677">
    <property type="term" value="F:DNA binding"/>
    <property type="evidence" value="ECO:0007669"/>
    <property type="project" value="InterPro"/>
</dbReference>
<dbReference type="GO" id="GO:0003911">
    <property type="term" value="F:DNA ligase (NAD+) activity"/>
    <property type="evidence" value="ECO:0007669"/>
    <property type="project" value="UniProtKB-UniRule"/>
</dbReference>
<dbReference type="GO" id="GO:0046872">
    <property type="term" value="F:metal ion binding"/>
    <property type="evidence" value="ECO:0007669"/>
    <property type="project" value="UniProtKB-KW"/>
</dbReference>
<dbReference type="GO" id="GO:0006281">
    <property type="term" value="P:DNA repair"/>
    <property type="evidence" value="ECO:0007669"/>
    <property type="project" value="UniProtKB-KW"/>
</dbReference>
<dbReference type="GO" id="GO:0006260">
    <property type="term" value="P:DNA replication"/>
    <property type="evidence" value="ECO:0007669"/>
    <property type="project" value="UniProtKB-KW"/>
</dbReference>
<dbReference type="CDD" id="cd17748">
    <property type="entry name" value="BRCT_DNA_ligase_like"/>
    <property type="match status" value="1"/>
</dbReference>
<dbReference type="CDD" id="cd00114">
    <property type="entry name" value="LIGANc"/>
    <property type="match status" value="1"/>
</dbReference>
<dbReference type="FunFam" id="1.10.150.20:FF:000006">
    <property type="entry name" value="DNA ligase"/>
    <property type="match status" value="1"/>
</dbReference>
<dbReference type="FunFam" id="1.10.150.20:FF:000007">
    <property type="entry name" value="DNA ligase"/>
    <property type="match status" value="1"/>
</dbReference>
<dbReference type="FunFam" id="1.10.287.610:FF:000002">
    <property type="entry name" value="DNA ligase"/>
    <property type="match status" value="1"/>
</dbReference>
<dbReference type="FunFam" id="2.40.50.140:FF:000012">
    <property type="entry name" value="DNA ligase"/>
    <property type="match status" value="1"/>
</dbReference>
<dbReference type="FunFam" id="3.30.470.30:FF:000001">
    <property type="entry name" value="DNA ligase"/>
    <property type="match status" value="1"/>
</dbReference>
<dbReference type="FunFam" id="3.40.50.10190:FF:000086">
    <property type="entry name" value="DNA ligase"/>
    <property type="match status" value="1"/>
</dbReference>
<dbReference type="Gene3D" id="6.20.10.30">
    <property type="match status" value="1"/>
</dbReference>
<dbReference type="Gene3D" id="1.10.150.20">
    <property type="entry name" value="5' to 3' exonuclease, C-terminal subdomain"/>
    <property type="match status" value="2"/>
</dbReference>
<dbReference type="Gene3D" id="3.40.50.10190">
    <property type="entry name" value="BRCT domain"/>
    <property type="match status" value="1"/>
</dbReference>
<dbReference type="Gene3D" id="3.30.470.30">
    <property type="entry name" value="DNA ligase/mRNA capping enzyme"/>
    <property type="match status" value="1"/>
</dbReference>
<dbReference type="Gene3D" id="1.10.287.610">
    <property type="entry name" value="Helix hairpin bin"/>
    <property type="match status" value="1"/>
</dbReference>
<dbReference type="Gene3D" id="2.40.50.140">
    <property type="entry name" value="Nucleic acid-binding proteins"/>
    <property type="match status" value="1"/>
</dbReference>
<dbReference type="HAMAP" id="MF_01588">
    <property type="entry name" value="DNA_ligase_A"/>
    <property type="match status" value="1"/>
</dbReference>
<dbReference type="InterPro" id="IPR001357">
    <property type="entry name" value="BRCT_dom"/>
</dbReference>
<dbReference type="InterPro" id="IPR036420">
    <property type="entry name" value="BRCT_dom_sf"/>
</dbReference>
<dbReference type="InterPro" id="IPR041663">
    <property type="entry name" value="DisA/LigA_HHH"/>
</dbReference>
<dbReference type="InterPro" id="IPR001679">
    <property type="entry name" value="DNA_ligase"/>
</dbReference>
<dbReference type="InterPro" id="IPR018239">
    <property type="entry name" value="DNA_ligase_AS"/>
</dbReference>
<dbReference type="InterPro" id="IPR033136">
    <property type="entry name" value="DNA_ligase_CS"/>
</dbReference>
<dbReference type="InterPro" id="IPR013839">
    <property type="entry name" value="DNAligase_adenylation"/>
</dbReference>
<dbReference type="InterPro" id="IPR013840">
    <property type="entry name" value="DNAligase_N"/>
</dbReference>
<dbReference type="InterPro" id="IPR003583">
    <property type="entry name" value="Hlx-hairpin-Hlx_DNA-bd_motif"/>
</dbReference>
<dbReference type="InterPro" id="IPR012340">
    <property type="entry name" value="NA-bd_OB-fold"/>
</dbReference>
<dbReference type="InterPro" id="IPR004150">
    <property type="entry name" value="NAD_DNA_ligase_OB"/>
</dbReference>
<dbReference type="InterPro" id="IPR010994">
    <property type="entry name" value="RuvA_2-like"/>
</dbReference>
<dbReference type="InterPro" id="IPR004149">
    <property type="entry name" value="Znf_DNAligase_C4"/>
</dbReference>
<dbReference type="NCBIfam" id="TIGR00575">
    <property type="entry name" value="dnlj"/>
    <property type="match status" value="1"/>
</dbReference>
<dbReference type="NCBIfam" id="NF005932">
    <property type="entry name" value="PRK07956.1"/>
    <property type="match status" value="1"/>
</dbReference>
<dbReference type="PANTHER" id="PTHR23389">
    <property type="entry name" value="CHROMOSOME TRANSMISSION FIDELITY FACTOR 18"/>
    <property type="match status" value="1"/>
</dbReference>
<dbReference type="PANTHER" id="PTHR23389:SF9">
    <property type="entry name" value="DNA LIGASE"/>
    <property type="match status" value="1"/>
</dbReference>
<dbReference type="Pfam" id="PF00533">
    <property type="entry name" value="BRCT"/>
    <property type="match status" value="1"/>
</dbReference>
<dbReference type="Pfam" id="PF01653">
    <property type="entry name" value="DNA_ligase_aden"/>
    <property type="match status" value="1"/>
</dbReference>
<dbReference type="Pfam" id="PF03120">
    <property type="entry name" value="DNA_ligase_OB"/>
    <property type="match status" value="1"/>
</dbReference>
<dbReference type="Pfam" id="PF03119">
    <property type="entry name" value="DNA_ligase_ZBD"/>
    <property type="match status" value="1"/>
</dbReference>
<dbReference type="Pfam" id="PF12826">
    <property type="entry name" value="HHH_2"/>
    <property type="match status" value="1"/>
</dbReference>
<dbReference type="Pfam" id="PF14520">
    <property type="entry name" value="HHH_5"/>
    <property type="match status" value="1"/>
</dbReference>
<dbReference type="Pfam" id="PF22745">
    <property type="entry name" value="Nlig-Ia"/>
    <property type="match status" value="1"/>
</dbReference>
<dbReference type="PIRSF" id="PIRSF001604">
    <property type="entry name" value="LigA"/>
    <property type="match status" value="1"/>
</dbReference>
<dbReference type="SMART" id="SM00292">
    <property type="entry name" value="BRCT"/>
    <property type="match status" value="1"/>
</dbReference>
<dbReference type="SMART" id="SM00278">
    <property type="entry name" value="HhH1"/>
    <property type="match status" value="3"/>
</dbReference>
<dbReference type="SMART" id="SM00532">
    <property type="entry name" value="LIGANc"/>
    <property type="match status" value="1"/>
</dbReference>
<dbReference type="SUPFAM" id="SSF52113">
    <property type="entry name" value="BRCT domain"/>
    <property type="match status" value="1"/>
</dbReference>
<dbReference type="SUPFAM" id="SSF56091">
    <property type="entry name" value="DNA ligase/mRNA capping enzyme, catalytic domain"/>
    <property type="match status" value="1"/>
</dbReference>
<dbReference type="SUPFAM" id="SSF50249">
    <property type="entry name" value="Nucleic acid-binding proteins"/>
    <property type="match status" value="1"/>
</dbReference>
<dbReference type="SUPFAM" id="SSF47781">
    <property type="entry name" value="RuvA domain 2-like"/>
    <property type="match status" value="1"/>
</dbReference>
<dbReference type="PROSITE" id="PS50172">
    <property type="entry name" value="BRCT"/>
    <property type="match status" value="1"/>
</dbReference>
<dbReference type="PROSITE" id="PS01055">
    <property type="entry name" value="DNA_LIGASE_N1"/>
    <property type="match status" value="1"/>
</dbReference>
<dbReference type="PROSITE" id="PS01056">
    <property type="entry name" value="DNA_LIGASE_N2"/>
    <property type="match status" value="1"/>
</dbReference>
<evidence type="ECO:0000255" key="1">
    <source>
        <dbReference type="HAMAP-Rule" id="MF_01588"/>
    </source>
</evidence>
<feature type="chain" id="PRO_0000340393" description="DNA ligase">
    <location>
        <begin position="1"/>
        <end position="688"/>
    </location>
</feature>
<feature type="domain" description="BRCT" evidence="1">
    <location>
        <begin position="590"/>
        <end position="679"/>
    </location>
</feature>
<feature type="active site" description="N6-AMP-lysine intermediate" evidence="1">
    <location>
        <position position="120"/>
    </location>
</feature>
<feature type="binding site" evidence="1">
    <location>
        <begin position="38"/>
        <end position="42"/>
    </location>
    <ligand>
        <name>NAD(+)</name>
        <dbReference type="ChEBI" id="CHEBI:57540"/>
    </ligand>
</feature>
<feature type="binding site" evidence="1">
    <location>
        <begin position="87"/>
        <end position="88"/>
    </location>
    <ligand>
        <name>NAD(+)</name>
        <dbReference type="ChEBI" id="CHEBI:57540"/>
    </ligand>
</feature>
<feature type="binding site" evidence="1">
    <location>
        <position position="118"/>
    </location>
    <ligand>
        <name>NAD(+)</name>
        <dbReference type="ChEBI" id="CHEBI:57540"/>
    </ligand>
</feature>
<feature type="binding site" evidence="1">
    <location>
        <position position="141"/>
    </location>
    <ligand>
        <name>NAD(+)</name>
        <dbReference type="ChEBI" id="CHEBI:57540"/>
    </ligand>
</feature>
<feature type="binding site" evidence="1">
    <location>
        <position position="175"/>
    </location>
    <ligand>
        <name>NAD(+)</name>
        <dbReference type="ChEBI" id="CHEBI:57540"/>
    </ligand>
</feature>
<feature type="binding site" evidence="1">
    <location>
        <position position="291"/>
    </location>
    <ligand>
        <name>NAD(+)</name>
        <dbReference type="ChEBI" id="CHEBI:57540"/>
    </ligand>
</feature>
<feature type="binding site" evidence="1">
    <location>
        <position position="315"/>
    </location>
    <ligand>
        <name>NAD(+)</name>
        <dbReference type="ChEBI" id="CHEBI:57540"/>
    </ligand>
</feature>
<feature type="binding site" evidence="1">
    <location>
        <position position="409"/>
    </location>
    <ligand>
        <name>Zn(2+)</name>
        <dbReference type="ChEBI" id="CHEBI:29105"/>
    </ligand>
</feature>
<feature type="binding site" evidence="1">
    <location>
        <position position="412"/>
    </location>
    <ligand>
        <name>Zn(2+)</name>
        <dbReference type="ChEBI" id="CHEBI:29105"/>
    </ligand>
</feature>
<feature type="binding site" evidence="1">
    <location>
        <position position="428"/>
    </location>
    <ligand>
        <name>Zn(2+)</name>
        <dbReference type="ChEBI" id="CHEBI:29105"/>
    </ligand>
</feature>
<feature type="binding site" evidence="1">
    <location>
        <position position="433"/>
    </location>
    <ligand>
        <name>Zn(2+)</name>
        <dbReference type="ChEBI" id="CHEBI:29105"/>
    </ligand>
</feature>
<accession>A5IKX0</accession>
<keyword id="KW-0227">DNA damage</keyword>
<keyword id="KW-0234">DNA repair</keyword>
<keyword id="KW-0235">DNA replication</keyword>
<keyword id="KW-0436">Ligase</keyword>
<keyword id="KW-0460">Magnesium</keyword>
<keyword id="KW-0464">Manganese</keyword>
<keyword id="KW-0479">Metal-binding</keyword>
<keyword id="KW-0520">NAD</keyword>
<keyword id="KW-0862">Zinc</keyword>
<comment type="function">
    <text evidence="1">DNA ligase that catalyzes the formation of phosphodiester linkages between 5'-phosphoryl and 3'-hydroxyl groups in double-stranded DNA using NAD as a coenzyme and as the energy source for the reaction. It is essential for DNA replication and repair of damaged DNA.</text>
</comment>
<comment type="catalytic activity">
    <reaction evidence="1">
        <text>NAD(+) + (deoxyribonucleotide)n-3'-hydroxyl + 5'-phospho-(deoxyribonucleotide)m = (deoxyribonucleotide)n+m + AMP + beta-nicotinamide D-nucleotide.</text>
        <dbReference type="EC" id="6.5.1.2"/>
    </reaction>
</comment>
<comment type="cofactor">
    <cofactor evidence="1">
        <name>Mg(2+)</name>
        <dbReference type="ChEBI" id="CHEBI:18420"/>
    </cofactor>
    <cofactor evidence="1">
        <name>Mn(2+)</name>
        <dbReference type="ChEBI" id="CHEBI:29035"/>
    </cofactor>
</comment>
<comment type="similarity">
    <text evidence="1">Belongs to the NAD-dependent DNA ligase family. LigA subfamily.</text>
</comment>
<organism>
    <name type="scientific">Thermotoga petrophila (strain ATCC BAA-488 / DSM 13995 / JCM 10881 / RKU-1)</name>
    <dbReference type="NCBI Taxonomy" id="390874"/>
    <lineage>
        <taxon>Bacteria</taxon>
        <taxon>Thermotogati</taxon>
        <taxon>Thermotogota</taxon>
        <taxon>Thermotogae</taxon>
        <taxon>Thermotogales</taxon>
        <taxon>Thermotogaceae</taxon>
        <taxon>Thermotoga</taxon>
    </lineage>
</organism>
<name>DNLJ_THEP1</name>